<protein>
    <recommendedName>
        <fullName>Acetyl-coenzyme A synthetase</fullName>
        <shortName>AcCoA synthetase</shortName>
        <shortName>Acs</shortName>
        <ecNumber>6.2.1.1</ecNumber>
    </recommendedName>
    <alternativeName>
        <fullName>Acetate--CoA ligase</fullName>
    </alternativeName>
    <alternativeName>
        <fullName>Acyl-activating enzyme</fullName>
    </alternativeName>
</protein>
<accession>Q93LL2</accession>
<dbReference type="EC" id="6.2.1.1"/>
<dbReference type="EMBL" id="AY037787">
    <property type="protein sequence ID" value="AAK68857.1"/>
    <property type="molecule type" value="Genomic_DNA"/>
</dbReference>
<dbReference type="SMR" id="Q93LL2"/>
<dbReference type="GO" id="GO:0005829">
    <property type="term" value="C:cytosol"/>
    <property type="evidence" value="ECO:0007669"/>
    <property type="project" value="TreeGrafter"/>
</dbReference>
<dbReference type="GO" id="GO:0003987">
    <property type="term" value="F:acetate-CoA ligase activity"/>
    <property type="evidence" value="ECO:0007669"/>
    <property type="project" value="UniProtKB-EC"/>
</dbReference>
<dbReference type="GO" id="GO:0005524">
    <property type="term" value="F:ATP binding"/>
    <property type="evidence" value="ECO:0007669"/>
    <property type="project" value="UniProtKB-KW"/>
</dbReference>
<dbReference type="GO" id="GO:0046872">
    <property type="term" value="F:metal ion binding"/>
    <property type="evidence" value="ECO:0007669"/>
    <property type="project" value="UniProtKB-KW"/>
</dbReference>
<dbReference type="GO" id="GO:0006085">
    <property type="term" value="P:acetyl-CoA biosynthetic process"/>
    <property type="evidence" value="ECO:0007669"/>
    <property type="project" value="TreeGrafter"/>
</dbReference>
<dbReference type="FunFam" id="3.40.50.12780:FF:000001">
    <property type="entry name" value="Acetyl-coenzyme A synthetase"/>
    <property type="match status" value="1"/>
</dbReference>
<dbReference type="Gene3D" id="3.40.50.12780">
    <property type="entry name" value="N-terminal domain of ligase-like"/>
    <property type="match status" value="1"/>
</dbReference>
<dbReference type="InterPro" id="IPR020459">
    <property type="entry name" value="AMP-binding"/>
</dbReference>
<dbReference type="InterPro" id="IPR020845">
    <property type="entry name" value="AMP-binding_CS"/>
</dbReference>
<dbReference type="InterPro" id="IPR000873">
    <property type="entry name" value="AMP-dep_synth/lig_dom"/>
</dbReference>
<dbReference type="InterPro" id="IPR042099">
    <property type="entry name" value="ANL_N_sf"/>
</dbReference>
<dbReference type="PANTHER" id="PTHR24095">
    <property type="entry name" value="ACETYL-COENZYME A SYNTHETASE"/>
    <property type="match status" value="1"/>
</dbReference>
<dbReference type="PANTHER" id="PTHR24095:SF14">
    <property type="entry name" value="ACETYL-COENZYME A SYNTHETASE 1"/>
    <property type="match status" value="1"/>
</dbReference>
<dbReference type="Pfam" id="PF00501">
    <property type="entry name" value="AMP-binding"/>
    <property type="match status" value="1"/>
</dbReference>
<dbReference type="PRINTS" id="PR00154">
    <property type="entry name" value="AMPBINDING"/>
</dbReference>
<dbReference type="SUPFAM" id="SSF56801">
    <property type="entry name" value="Acetyl-CoA synthetase-like"/>
    <property type="match status" value="1"/>
</dbReference>
<dbReference type="PROSITE" id="PS00455">
    <property type="entry name" value="AMP_BINDING"/>
    <property type="match status" value="1"/>
</dbReference>
<proteinExistence type="inferred from homology"/>
<name>ACSA_NOSLI</name>
<gene>
    <name type="primary">acsA</name>
</gene>
<feature type="chain" id="PRO_0000208371" description="Acetyl-coenzyme A synthetase">
    <location>
        <begin position="1" status="less than"/>
        <end position="337" status="greater than"/>
    </location>
</feature>
<feature type="binding site" evidence="1">
    <location>
        <begin position="131"/>
        <end position="134"/>
    </location>
    <ligand>
        <name>CoA</name>
        <dbReference type="ChEBI" id="CHEBI:57287"/>
    </ligand>
</feature>
<feature type="binding site" evidence="1">
    <location>
        <position position="249"/>
    </location>
    <ligand>
        <name>CoA</name>
        <dbReference type="ChEBI" id="CHEBI:57287"/>
    </ligand>
</feature>
<feature type="binding site" evidence="1">
    <location>
        <position position="273"/>
    </location>
    <ligand>
        <name>CoA</name>
        <dbReference type="ChEBI" id="CHEBI:57287"/>
    </ligand>
</feature>
<feature type="binding site" evidence="1">
    <location>
        <begin position="325"/>
        <end position="327"/>
    </location>
    <ligand>
        <name>ATP</name>
        <dbReference type="ChEBI" id="CHEBI:30616"/>
    </ligand>
</feature>
<feature type="non-terminal residue">
    <location>
        <position position="1"/>
    </location>
</feature>
<feature type="non-terminal residue">
    <location>
        <position position="337"/>
    </location>
</feature>
<keyword id="KW-0007">Acetylation</keyword>
<keyword id="KW-0067">ATP-binding</keyword>
<keyword id="KW-0436">Ligase</keyword>
<keyword id="KW-0460">Magnesium</keyword>
<keyword id="KW-0479">Metal-binding</keyword>
<keyword id="KW-0547">Nucleotide-binding</keyword>
<organism>
    <name type="scientific">Nostoc linckia</name>
    <dbReference type="NCBI Taxonomy" id="92942"/>
    <lineage>
        <taxon>Bacteria</taxon>
        <taxon>Bacillati</taxon>
        <taxon>Cyanobacteriota</taxon>
        <taxon>Cyanophyceae</taxon>
        <taxon>Nostocales</taxon>
        <taxon>Nostocaceae</taxon>
        <taxon>Nostoc</taxon>
    </lineage>
</organism>
<comment type="function">
    <text evidence="1">Catalyzes the conversion of acetate into acetyl-CoA (AcCoA), an essential intermediate at the junction of anabolic and catabolic pathways. AcsA undergoes a two-step reaction. In the first half reaction, AcsA combines acetate with ATP to form acetyl-adenylate (AcAMP) intermediate. In the second half reaction, it can then transfer the acetyl group from AcAMP to the sulfhydryl group of CoA, forming the product AcCoA (By similarity).</text>
</comment>
<comment type="catalytic activity">
    <reaction>
        <text>acetate + ATP + CoA = acetyl-CoA + AMP + diphosphate</text>
        <dbReference type="Rhea" id="RHEA:23176"/>
        <dbReference type="ChEBI" id="CHEBI:30089"/>
        <dbReference type="ChEBI" id="CHEBI:30616"/>
        <dbReference type="ChEBI" id="CHEBI:33019"/>
        <dbReference type="ChEBI" id="CHEBI:57287"/>
        <dbReference type="ChEBI" id="CHEBI:57288"/>
        <dbReference type="ChEBI" id="CHEBI:456215"/>
        <dbReference type="EC" id="6.2.1.1"/>
    </reaction>
</comment>
<comment type="cofactor">
    <cofactor evidence="1">
        <name>Mg(2+)</name>
        <dbReference type="ChEBI" id="CHEBI:18420"/>
    </cofactor>
</comment>
<comment type="PTM">
    <text evidence="1">Acetylated. Deacetylation by the SIR2-homolog deacetylase activates the enzyme (By similarity).</text>
</comment>
<comment type="similarity">
    <text evidence="2">Belongs to the ATP-dependent AMP-binding enzyme family.</text>
</comment>
<sequence length="337" mass="37143">TSGKVSIKWFEDGVLNVTESCLDRHLATRGDQVAIIWEGDDPNADSKVTYRELHARVCQLANAMRGMGVQKGDRVCIYLPMIEEAAVAMLACARIGAVHSIVFGGFSPDSLSSRIQDSDCVLLITADEGRRGGRKVPLKVNADEALKTCPSIRHVIVAKNTGGNVAMQEGRDHWWADACDNQPKTSTPEPMGAEDPLFILYTSGSTGKPKGVLHTTGGYLVWASFTHQNVFDYRDGEIYWCTADVGWVTGHTYIVYGPLANGATTLMFEGVPNYPTVSRFWEVIDKHQVNIFYTAPTAIRALMRDGEAPVKKTSRKSLRILGSVGEPINPEAWLWYY</sequence>
<reference key="1">
    <citation type="submission" date="2001-05" db="EMBL/GenBank/DDBJ databases">
        <authorList>
            <person name="Dvornyk V.Y."/>
            <person name="Vinogradova O.N."/>
            <person name="Krugman T."/>
            <person name="Nevo E."/>
        </authorList>
    </citation>
    <scope>NUCLEOTIDE SEQUENCE [GENOMIC DNA]</scope>
</reference>
<evidence type="ECO:0000250" key="1"/>
<evidence type="ECO:0000305" key="2"/>